<sequence>MTQLDSRTEATTTRAFDQPRAEAAVRELLLAIGEDPDRGGLRDTPARVARAYREIFAGLYTDPDAVLNTMFDEDHDELVLIKEIPLYSTCEHHLVSFHGVAHVGYIPGRDGRVTGLSKIARLVDLYAKRPQVQERLTSQIADALVKRLGPRGVIVVVEAEHLCMAMRGVRKPGAVTTTSAVRGQFKTDAASRAEALDLILRK</sequence>
<proteinExistence type="inferred from homology"/>
<accession>B2HJ53</accession>
<evidence type="ECO:0000255" key="1">
    <source>
        <dbReference type="HAMAP-Rule" id="MF_00223"/>
    </source>
</evidence>
<feature type="chain" id="PRO_1000100185" description="GTP cyclohydrolase 1">
    <location>
        <begin position="1"/>
        <end position="202"/>
    </location>
</feature>
<feature type="binding site" evidence="1">
    <location>
        <position position="90"/>
    </location>
    <ligand>
        <name>Zn(2+)</name>
        <dbReference type="ChEBI" id="CHEBI:29105"/>
    </ligand>
</feature>
<feature type="binding site" evidence="1">
    <location>
        <position position="93"/>
    </location>
    <ligand>
        <name>Zn(2+)</name>
        <dbReference type="ChEBI" id="CHEBI:29105"/>
    </ligand>
</feature>
<feature type="binding site" evidence="1">
    <location>
        <position position="163"/>
    </location>
    <ligand>
        <name>Zn(2+)</name>
        <dbReference type="ChEBI" id="CHEBI:29105"/>
    </ligand>
</feature>
<protein>
    <recommendedName>
        <fullName evidence="1">GTP cyclohydrolase 1</fullName>
        <ecNumber evidence="1">3.5.4.16</ecNumber>
    </recommendedName>
    <alternativeName>
        <fullName evidence="1">GTP cyclohydrolase I</fullName>
        <shortName evidence="1">GTP-CH-I</shortName>
    </alternativeName>
</protein>
<reference key="1">
    <citation type="journal article" date="2008" name="Genome Res.">
        <title>Insights from the complete genome sequence of Mycobacterium marinum on the evolution of Mycobacterium tuberculosis.</title>
        <authorList>
            <person name="Stinear T.P."/>
            <person name="Seemann T."/>
            <person name="Harrison P.F."/>
            <person name="Jenkin G.A."/>
            <person name="Davies J.K."/>
            <person name="Johnson P.D."/>
            <person name="Abdellah Z."/>
            <person name="Arrowsmith C."/>
            <person name="Chillingworth T."/>
            <person name="Churcher C."/>
            <person name="Clarke K."/>
            <person name="Cronin A."/>
            <person name="Davis P."/>
            <person name="Goodhead I."/>
            <person name="Holroyd N."/>
            <person name="Jagels K."/>
            <person name="Lord A."/>
            <person name="Moule S."/>
            <person name="Mungall K."/>
            <person name="Norbertczak H."/>
            <person name="Quail M.A."/>
            <person name="Rabbinowitsch E."/>
            <person name="Walker D."/>
            <person name="White B."/>
            <person name="Whitehead S."/>
            <person name="Small P.L."/>
            <person name="Brosch R."/>
            <person name="Ramakrishnan L."/>
            <person name="Fischbach M.A."/>
            <person name="Parkhill J."/>
            <person name="Cole S.T."/>
        </authorList>
    </citation>
    <scope>NUCLEOTIDE SEQUENCE [LARGE SCALE GENOMIC DNA]</scope>
    <source>
        <strain>ATCC BAA-535 / M</strain>
    </source>
</reference>
<name>GCH1_MYCMM</name>
<organism>
    <name type="scientific">Mycobacterium marinum (strain ATCC BAA-535 / M)</name>
    <dbReference type="NCBI Taxonomy" id="216594"/>
    <lineage>
        <taxon>Bacteria</taxon>
        <taxon>Bacillati</taxon>
        <taxon>Actinomycetota</taxon>
        <taxon>Actinomycetes</taxon>
        <taxon>Mycobacteriales</taxon>
        <taxon>Mycobacteriaceae</taxon>
        <taxon>Mycobacterium</taxon>
        <taxon>Mycobacterium ulcerans group</taxon>
    </lineage>
</organism>
<comment type="catalytic activity">
    <reaction evidence="1">
        <text>GTP + H2O = 7,8-dihydroneopterin 3'-triphosphate + formate + H(+)</text>
        <dbReference type="Rhea" id="RHEA:17473"/>
        <dbReference type="ChEBI" id="CHEBI:15377"/>
        <dbReference type="ChEBI" id="CHEBI:15378"/>
        <dbReference type="ChEBI" id="CHEBI:15740"/>
        <dbReference type="ChEBI" id="CHEBI:37565"/>
        <dbReference type="ChEBI" id="CHEBI:58462"/>
        <dbReference type="EC" id="3.5.4.16"/>
    </reaction>
</comment>
<comment type="pathway">
    <text evidence="1">Cofactor biosynthesis; 7,8-dihydroneopterin triphosphate biosynthesis; 7,8-dihydroneopterin triphosphate from GTP: step 1/1.</text>
</comment>
<comment type="subunit">
    <text evidence="1">Homomer.</text>
</comment>
<comment type="similarity">
    <text evidence="1">Belongs to the GTP cyclohydrolase I family.</text>
</comment>
<dbReference type="EC" id="3.5.4.16" evidence="1"/>
<dbReference type="EMBL" id="CP000854">
    <property type="protein sequence ID" value="ACC43516.1"/>
    <property type="molecule type" value="Genomic_DNA"/>
</dbReference>
<dbReference type="RefSeq" id="WP_012396632.1">
    <property type="nucleotide sequence ID" value="NC_010612.1"/>
</dbReference>
<dbReference type="SMR" id="B2HJ53"/>
<dbReference type="STRING" id="216594.MMAR_5112"/>
<dbReference type="GeneID" id="93435000"/>
<dbReference type="KEGG" id="mmi:MMAR_5112"/>
<dbReference type="eggNOG" id="COG0302">
    <property type="taxonomic scope" value="Bacteria"/>
</dbReference>
<dbReference type="HOGENOM" id="CLU_049768_3_3_11"/>
<dbReference type="OrthoDB" id="9801207at2"/>
<dbReference type="UniPathway" id="UPA00848">
    <property type="reaction ID" value="UER00151"/>
</dbReference>
<dbReference type="Proteomes" id="UP000001190">
    <property type="component" value="Chromosome"/>
</dbReference>
<dbReference type="GO" id="GO:0005737">
    <property type="term" value="C:cytoplasm"/>
    <property type="evidence" value="ECO:0007669"/>
    <property type="project" value="TreeGrafter"/>
</dbReference>
<dbReference type="GO" id="GO:0005525">
    <property type="term" value="F:GTP binding"/>
    <property type="evidence" value="ECO:0007669"/>
    <property type="project" value="UniProtKB-KW"/>
</dbReference>
<dbReference type="GO" id="GO:0003934">
    <property type="term" value="F:GTP cyclohydrolase I activity"/>
    <property type="evidence" value="ECO:0007669"/>
    <property type="project" value="UniProtKB-UniRule"/>
</dbReference>
<dbReference type="GO" id="GO:0008270">
    <property type="term" value="F:zinc ion binding"/>
    <property type="evidence" value="ECO:0007669"/>
    <property type="project" value="UniProtKB-UniRule"/>
</dbReference>
<dbReference type="GO" id="GO:0006730">
    <property type="term" value="P:one-carbon metabolic process"/>
    <property type="evidence" value="ECO:0007669"/>
    <property type="project" value="UniProtKB-UniRule"/>
</dbReference>
<dbReference type="GO" id="GO:0006729">
    <property type="term" value="P:tetrahydrobiopterin biosynthetic process"/>
    <property type="evidence" value="ECO:0007669"/>
    <property type="project" value="TreeGrafter"/>
</dbReference>
<dbReference type="GO" id="GO:0046654">
    <property type="term" value="P:tetrahydrofolate biosynthetic process"/>
    <property type="evidence" value="ECO:0007669"/>
    <property type="project" value="UniProtKB-UniRule"/>
</dbReference>
<dbReference type="FunFam" id="1.10.286.10:FF:000001">
    <property type="entry name" value="GTP cyclohydrolase 1"/>
    <property type="match status" value="1"/>
</dbReference>
<dbReference type="FunFam" id="3.30.1130.10:FF:000001">
    <property type="entry name" value="GTP cyclohydrolase 1"/>
    <property type="match status" value="1"/>
</dbReference>
<dbReference type="Gene3D" id="1.10.286.10">
    <property type="match status" value="1"/>
</dbReference>
<dbReference type="Gene3D" id="3.30.1130.10">
    <property type="match status" value="1"/>
</dbReference>
<dbReference type="HAMAP" id="MF_00223">
    <property type="entry name" value="FolE"/>
    <property type="match status" value="1"/>
</dbReference>
<dbReference type="InterPro" id="IPR043133">
    <property type="entry name" value="GTP-CH-I_C/QueF"/>
</dbReference>
<dbReference type="InterPro" id="IPR043134">
    <property type="entry name" value="GTP-CH-I_N"/>
</dbReference>
<dbReference type="InterPro" id="IPR001474">
    <property type="entry name" value="GTP_CycHdrlase_I"/>
</dbReference>
<dbReference type="InterPro" id="IPR018234">
    <property type="entry name" value="GTP_CycHdrlase_I_CS"/>
</dbReference>
<dbReference type="InterPro" id="IPR020602">
    <property type="entry name" value="GTP_CycHdrlase_I_dom"/>
</dbReference>
<dbReference type="NCBIfam" id="TIGR00063">
    <property type="entry name" value="folE"/>
    <property type="match status" value="1"/>
</dbReference>
<dbReference type="NCBIfam" id="NF006825">
    <property type="entry name" value="PRK09347.1-2"/>
    <property type="match status" value="1"/>
</dbReference>
<dbReference type="NCBIfam" id="NF006826">
    <property type="entry name" value="PRK09347.1-3"/>
    <property type="match status" value="1"/>
</dbReference>
<dbReference type="PANTHER" id="PTHR11109:SF7">
    <property type="entry name" value="GTP CYCLOHYDROLASE 1"/>
    <property type="match status" value="1"/>
</dbReference>
<dbReference type="PANTHER" id="PTHR11109">
    <property type="entry name" value="GTP CYCLOHYDROLASE I"/>
    <property type="match status" value="1"/>
</dbReference>
<dbReference type="Pfam" id="PF01227">
    <property type="entry name" value="GTP_cyclohydroI"/>
    <property type="match status" value="1"/>
</dbReference>
<dbReference type="SUPFAM" id="SSF55620">
    <property type="entry name" value="Tetrahydrobiopterin biosynthesis enzymes-like"/>
    <property type="match status" value="1"/>
</dbReference>
<dbReference type="PROSITE" id="PS00859">
    <property type="entry name" value="GTP_CYCLOHYDROL_1_1"/>
    <property type="match status" value="1"/>
</dbReference>
<dbReference type="PROSITE" id="PS00860">
    <property type="entry name" value="GTP_CYCLOHYDROL_1_2"/>
    <property type="match status" value="1"/>
</dbReference>
<keyword id="KW-0342">GTP-binding</keyword>
<keyword id="KW-0378">Hydrolase</keyword>
<keyword id="KW-0479">Metal-binding</keyword>
<keyword id="KW-0547">Nucleotide-binding</keyword>
<keyword id="KW-0554">One-carbon metabolism</keyword>
<keyword id="KW-1185">Reference proteome</keyword>
<keyword id="KW-0862">Zinc</keyword>
<gene>
    <name evidence="1" type="primary">folE</name>
    <name type="ordered locus">MMAR_5112</name>
</gene>